<accession>A3PAR5</accession>
<comment type="function">
    <text evidence="1">Cell wall formation. Catalyzes the transfer of a GlcNAc subunit on undecaprenyl-pyrophosphoryl-MurNAc-pentapeptide (lipid intermediate I) to form undecaprenyl-pyrophosphoryl-MurNAc-(pentapeptide)GlcNAc (lipid intermediate II).</text>
</comment>
<comment type="catalytic activity">
    <reaction evidence="1">
        <text>di-trans,octa-cis-undecaprenyl diphospho-N-acetyl-alpha-D-muramoyl-L-alanyl-D-glutamyl-meso-2,6-diaminopimeloyl-D-alanyl-D-alanine + UDP-N-acetyl-alpha-D-glucosamine = di-trans,octa-cis-undecaprenyl diphospho-[N-acetyl-alpha-D-glucosaminyl-(1-&gt;4)]-N-acetyl-alpha-D-muramoyl-L-alanyl-D-glutamyl-meso-2,6-diaminopimeloyl-D-alanyl-D-alanine + UDP + H(+)</text>
        <dbReference type="Rhea" id="RHEA:31227"/>
        <dbReference type="ChEBI" id="CHEBI:15378"/>
        <dbReference type="ChEBI" id="CHEBI:57705"/>
        <dbReference type="ChEBI" id="CHEBI:58223"/>
        <dbReference type="ChEBI" id="CHEBI:61387"/>
        <dbReference type="ChEBI" id="CHEBI:61388"/>
        <dbReference type="EC" id="2.4.1.227"/>
    </reaction>
</comment>
<comment type="pathway">
    <text evidence="1">Cell wall biogenesis; peptidoglycan biosynthesis.</text>
</comment>
<comment type="subcellular location">
    <subcellularLocation>
        <location evidence="1">Cell inner membrane</location>
        <topology evidence="1">Peripheral membrane protein</topology>
        <orientation evidence="1">Cytoplasmic side</orientation>
    </subcellularLocation>
</comment>
<comment type="similarity">
    <text evidence="1">Belongs to the glycosyltransferase 28 family. MurG subfamily.</text>
</comment>
<dbReference type="EC" id="2.4.1.227" evidence="1"/>
<dbReference type="EMBL" id="CP000576">
    <property type="protein sequence ID" value="ABO16840.1"/>
    <property type="molecule type" value="Genomic_DNA"/>
</dbReference>
<dbReference type="RefSeq" id="WP_011862242.1">
    <property type="nucleotide sequence ID" value="NC_009091.1"/>
</dbReference>
<dbReference type="SMR" id="A3PAR5"/>
<dbReference type="STRING" id="167546.P9301_02171"/>
<dbReference type="CAZy" id="GT28">
    <property type="family name" value="Glycosyltransferase Family 28"/>
</dbReference>
<dbReference type="KEGG" id="pmg:P9301_02171"/>
<dbReference type="eggNOG" id="COG0707">
    <property type="taxonomic scope" value="Bacteria"/>
</dbReference>
<dbReference type="HOGENOM" id="CLU_037404_0_0_3"/>
<dbReference type="OrthoDB" id="9808936at2"/>
<dbReference type="UniPathway" id="UPA00219"/>
<dbReference type="Proteomes" id="UP000001430">
    <property type="component" value="Chromosome"/>
</dbReference>
<dbReference type="GO" id="GO:0005886">
    <property type="term" value="C:plasma membrane"/>
    <property type="evidence" value="ECO:0007669"/>
    <property type="project" value="UniProtKB-SubCell"/>
</dbReference>
<dbReference type="GO" id="GO:0051991">
    <property type="term" value="F:UDP-N-acetyl-D-glucosamine:N-acetylmuramoyl-L-alanyl-D-glutamyl-meso-2,6-diaminopimelyl-D-alanyl-D-alanine-diphosphoundecaprenol 4-beta-N-acetylglucosaminlytransferase activity"/>
    <property type="evidence" value="ECO:0007669"/>
    <property type="project" value="RHEA"/>
</dbReference>
<dbReference type="GO" id="GO:0050511">
    <property type="term" value="F:undecaprenyldiphospho-muramoylpentapeptide beta-N-acetylglucosaminyltransferase activity"/>
    <property type="evidence" value="ECO:0007669"/>
    <property type="project" value="UniProtKB-UniRule"/>
</dbReference>
<dbReference type="GO" id="GO:0005975">
    <property type="term" value="P:carbohydrate metabolic process"/>
    <property type="evidence" value="ECO:0007669"/>
    <property type="project" value="InterPro"/>
</dbReference>
<dbReference type="GO" id="GO:0051301">
    <property type="term" value="P:cell division"/>
    <property type="evidence" value="ECO:0007669"/>
    <property type="project" value="UniProtKB-KW"/>
</dbReference>
<dbReference type="GO" id="GO:0071555">
    <property type="term" value="P:cell wall organization"/>
    <property type="evidence" value="ECO:0007669"/>
    <property type="project" value="UniProtKB-KW"/>
</dbReference>
<dbReference type="GO" id="GO:0030259">
    <property type="term" value="P:lipid glycosylation"/>
    <property type="evidence" value="ECO:0007669"/>
    <property type="project" value="UniProtKB-UniRule"/>
</dbReference>
<dbReference type="GO" id="GO:0009252">
    <property type="term" value="P:peptidoglycan biosynthetic process"/>
    <property type="evidence" value="ECO:0007669"/>
    <property type="project" value="UniProtKB-UniRule"/>
</dbReference>
<dbReference type="GO" id="GO:0008360">
    <property type="term" value="P:regulation of cell shape"/>
    <property type="evidence" value="ECO:0007669"/>
    <property type="project" value="UniProtKB-KW"/>
</dbReference>
<dbReference type="CDD" id="cd03785">
    <property type="entry name" value="GT28_MurG"/>
    <property type="match status" value="1"/>
</dbReference>
<dbReference type="Gene3D" id="3.40.50.2000">
    <property type="entry name" value="Glycogen Phosphorylase B"/>
    <property type="match status" value="2"/>
</dbReference>
<dbReference type="HAMAP" id="MF_00033">
    <property type="entry name" value="MurG"/>
    <property type="match status" value="1"/>
</dbReference>
<dbReference type="InterPro" id="IPR006009">
    <property type="entry name" value="GlcNAc_MurG"/>
</dbReference>
<dbReference type="InterPro" id="IPR007235">
    <property type="entry name" value="Glyco_trans_28_C"/>
</dbReference>
<dbReference type="InterPro" id="IPR004276">
    <property type="entry name" value="GlycoTrans_28_N"/>
</dbReference>
<dbReference type="PANTHER" id="PTHR21015:SF22">
    <property type="entry name" value="GLYCOSYLTRANSFERASE"/>
    <property type="match status" value="1"/>
</dbReference>
<dbReference type="PANTHER" id="PTHR21015">
    <property type="entry name" value="UDP-N-ACETYLGLUCOSAMINE--N-ACETYLMURAMYL-(PENTAPEPTIDE) PYROPHOSPHORYL-UNDECAPRENOL N-ACETYLGLUCOSAMINE TRANSFERASE 1"/>
    <property type="match status" value="1"/>
</dbReference>
<dbReference type="Pfam" id="PF04101">
    <property type="entry name" value="Glyco_tran_28_C"/>
    <property type="match status" value="1"/>
</dbReference>
<dbReference type="Pfam" id="PF03033">
    <property type="entry name" value="Glyco_transf_28"/>
    <property type="match status" value="1"/>
</dbReference>
<dbReference type="SUPFAM" id="SSF53756">
    <property type="entry name" value="UDP-Glycosyltransferase/glycogen phosphorylase"/>
    <property type="match status" value="1"/>
</dbReference>
<gene>
    <name evidence="1" type="primary">murG</name>
    <name type="ordered locus">P9301_02171</name>
</gene>
<evidence type="ECO:0000255" key="1">
    <source>
        <dbReference type="HAMAP-Rule" id="MF_00033"/>
    </source>
</evidence>
<proteinExistence type="inferred from homology"/>
<reference key="1">
    <citation type="journal article" date="2007" name="PLoS Genet.">
        <title>Patterns and implications of gene gain and loss in the evolution of Prochlorococcus.</title>
        <authorList>
            <person name="Kettler G.C."/>
            <person name="Martiny A.C."/>
            <person name="Huang K."/>
            <person name="Zucker J."/>
            <person name="Coleman M.L."/>
            <person name="Rodrigue S."/>
            <person name="Chen F."/>
            <person name="Lapidus A."/>
            <person name="Ferriera S."/>
            <person name="Johnson J."/>
            <person name="Steglich C."/>
            <person name="Church G.M."/>
            <person name="Richardson P."/>
            <person name="Chisholm S.W."/>
        </authorList>
    </citation>
    <scope>NUCLEOTIDE SEQUENCE [LARGE SCALE GENOMIC DNA]</scope>
    <source>
        <strain>MIT 9301</strain>
    </source>
</reference>
<keyword id="KW-0131">Cell cycle</keyword>
<keyword id="KW-0132">Cell division</keyword>
<keyword id="KW-0997">Cell inner membrane</keyword>
<keyword id="KW-1003">Cell membrane</keyword>
<keyword id="KW-0133">Cell shape</keyword>
<keyword id="KW-0961">Cell wall biogenesis/degradation</keyword>
<keyword id="KW-0328">Glycosyltransferase</keyword>
<keyword id="KW-0472">Membrane</keyword>
<keyword id="KW-0573">Peptidoglycan synthesis</keyword>
<keyword id="KW-1185">Reference proteome</keyword>
<keyword id="KW-0808">Transferase</keyword>
<feature type="chain" id="PRO_0000315138" description="UDP-N-acetylglucosamine--N-acetylmuramyl-(pentapeptide) pyrophosphoryl-undecaprenol N-acetylglucosamine transferase">
    <location>
        <begin position="1"/>
        <end position="363"/>
    </location>
</feature>
<feature type="binding site" evidence="1">
    <location>
        <begin position="14"/>
        <end position="16"/>
    </location>
    <ligand>
        <name>UDP-N-acetyl-alpha-D-glucosamine</name>
        <dbReference type="ChEBI" id="CHEBI:57705"/>
    </ligand>
</feature>
<feature type="binding site" evidence="1">
    <location>
        <position position="122"/>
    </location>
    <ligand>
        <name>UDP-N-acetyl-alpha-D-glucosamine</name>
        <dbReference type="ChEBI" id="CHEBI:57705"/>
    </ligand>
</feature>
<feature type="binding site" evidence="1">
    <location>
        <position position="163"/>
    </location>
    <ligand>
        <name>UDP-N-acetyl-alpha-D-glucosamine</name>
        <dbReference type="ChEBI" id="CHEBI:57705"/>
    </ligand>
</feature>
<feature type="binding site" evidence="1">
    <location>
        <position position="190"/>
    </location>
    <ligand>
        <name>UDP-N-acetyl-alpha-D-glucosamine</name>
        <dbReference type="ChEBI" id="CHEBI:57705"/>
    </ligand>
</feature>
<feature type="binding site" evidence="1">
    <location>
        <position position="285"/>
    </location>
    <ligand>
        <name>UDP-N-acetyl-alpha-D-glucosamine</name>
        <dbReference type="ChEBI" id="CHEBI:57705"/>
    </ligand>
</feature>
<sequence>MSKKNNLLVAASGTGGHIFPALAVTKEVEDKWNIHWLGVHKRLDANFIPKKYNLRTLNIKTPRKNIFLFYQYFRILMSTFQVIWILKEEKINLVFTTGGYISAPTIIASKLLRIPVIIHESNLIPGMVTKNFGFLCNYVLLGFKRTNSYLKNCKTIFTGTPLREQFYKSNLLPDWVPQGKGPLLIVMGGSQGAKAINQILYESLDFLMKKQFRIVHIIGECNQKYFNLNTSNNYVQKKFTNEIAALIQNCDLVISRSGAGTINELIESEKPSILIPYPNSKNNHQEKNAMILAESGGSILINQNNISKEVFEETLERIFKIKSKKGKNHYEILDLMKKNMENNKKIKSKIEIKKFINYFLKEF</sequence>
<organism>
    <name type="scientific">Prochlorococcus marinus (strain MIT 9301)</name>
    <dbReference type="NCBI Taxonomy" id="167546"/>
    <lineage>
        <taxon>Bacteria</taxon>
        <taxon>Bacillati</taxon>
        <taxon>Cyanobacteriota</taxon>
        <taxon>Cyanophyceae</taxon>
        <taxon>Synechococcales</taxon>
        <taxon>Prochlorococcaceae</taxon>
        <taxon>Prochlorococcus</taxon>
    </lineage>
</organism>
<name>MURG_PROM0</name>
<protein>
    <recommendedName>
        <fullName evidence="1">UDP-N-acetylglucosamine--N-acetylmuramyl-(pentapeptide) pyrophosphoryl-undecaprenol N-acetylglucosamine transferase</fullName>
        <ecNumber evidence="1">2.4.1.227</ecNumber>
    </recommendedName>
    <alternativeName>
        <fullName evidence="1">Undecaprenyl-PP-MurNAc-pentapeptide-UDPGlcNAc GlcNAc transferase</fullName>
    </alternativeName>
</protein>